<protein>
    <recommendedName>
        <fullName evidence="1">Transcriptional repressor NrdR</fullName>
    </recommendedName>
</protein>
<keyword id="KW-0067">ATP-binding</keyword>
<keyword id="KW-0238">DNA-binding</keyword>
<keyword id="KW-0479">Metal-binding</keyword>
<keyword id="KW-0547">Nucleotide-binding</keyword>
<keyword id="KW-1185">Reference proteome</keyword>
<keyword id="KW-0678">Repressor</keyword>
<keyword id="KW-0804">Transcription</keyword>
<keyword id="KW-0805">Transcription regulation</keyword>
<keyword id="KW-0862">Zinc</keyword>
<keyword id="KW-0863">Zinc-finger</keyword>
<comment type="function">
    <text evidence="1">Negatively regulates transcription of bacterial ribonucleotide reductase nrd genes and operons by binding to NrdR-boxes.</text>
</comment>
<comment type="cofactor">
    <cofactor evidence="1">
        <name>Zn(2+)</name>
        <dbReference type="ChEBI" id="CHEBI:29105"/>
    </cofactor>
    <text evidence="1">Binds 1 zinc ion.</text>
</comment>
<comment type="similarity">
    <text evidence="1">Belongs to the NrdR family.</text>
</comment>
<proteinExistence type="inferred from homology"/>
<gene>
    <name evidence="1" type="primary">nrdR</name>
    <name type="ordered locus">Psyc_2142</name>
</gene>
<name>NRDR_PSYA2</name>
<reference key="1">
    <citation type="journal article" date="2010" name="Appl. Environ. Microbiol.">
        <title>The genome sequence of Psychrobacter arcticus 273-4, a psychroactive Siberian permafrost bacterium, reveals mechanisms for adaptation to low-temperature growth.</title>
        <authorList>
            <person name="Ayala-del-Rio H.L."/>
            <person name="Chain P.S."/>
            <person name="Grzymski J.J."/>
            <person name="Ponder M.A."/>
            <person name="Ivanova N."/>
            <person name="Bergholz P.W."/>
            <person name="Di Bartolo G."/>
            <person name="Hauser L."/>
            <person name="Land M."/>
            <person name="Bakermans C."/>
            <person name="Rodrigues D."/>
            <person name="Klappenbach J."/>
            <person name="Zarka D."/>
            <person name="Larimer F."/>
            <person name="Richardson P."/>
            <person name="Murray A."/>
            <person name="Thomashow M."/>
            <person name="Tiedje J.M."/>
        </authorList>
    </citation>
    <scope>NUCLEOTIDE SEQUENCE [LARGE SCALE GENOMIC DNA]</scope>
    <source>
        <strain>DSM 17307 / VKM B-2377 / 273-4</strain>
    </source>
</reference>
<dbReference type="EMBL" id="CP000082">
    <property type="protein sequence ID" value="AAZ19989.1"/>
    <property type="molecule type" value="Genomic_DNA"/>
</dbReference>
<dbReference type="RefSeq" id="WP_011281395.1">
    <property type="nucleotide sequence ID" value="NC_007204.1"/>
</dbReference>
<dbReference type="SMR" id="Q4FPR9"/>
<dbReference type="STRING" id="259536.Psyc_2142"/>
<dbReference type="KEGG" id="par:Psyc_2142"/>
<dbReference type="eggNOG" id="COG1327">
    <property type="taxonomic scope" value="Bacteria"/>
</dbReference>
<dbReference type="HOGENOM" id="CLU_108412_0_0_6"/>
<dbReference type="OrthoDB" id="9807461at2"/>
<dbReference type="Proteomes" id="UP000000546">
    <property type="component" value="Chromosome"/>
</dbReference>
<dbReference type="GO" id="GO:0005524">
    <property type="term" value="F:ATP binding"/>
    <property type="evidence" value="ECO:0007669"/>
    <property type="project" value="UniProtKB-KW"/>
</dbReference>
<dbReference type="GO" id="GO:0003677">
    <property type="term" value="F:DNA binding"/>
    <property type="evidence" value="ECO:0007669"/>
    <property type="project" value="UniProtKB-KW"/>
</dbReference>
<dbReference type="GO" id="GO:0008270">
    <property type="term" value="F:zinc ion binding"/>
    <property type="evidence" value="ECO:0007669"/>
    <property type="project" value="UniProtKB-UniRule"/>
</dbReference>
<dbReference type="GO" id="GO:0045892">
    <property type="term" value="P:negative regulation of DNA-templated transcription"/>
    <property type="evidence" value="ECO:0007669"/>
    <property type="project" value="UniProtKB-UniRule"/>
</dbReference>
<dbReference type="HAMAP" id="MF_00440">
    <property type="entry name" value="NrdR"/>
    <property type="match status" value="1"/>
</dbReference>
<dbReference type="InterPro" id="IPR005144">
    <property type="entry name" value="ATP-cone_dom"/>
</dbReference>
<dbReference type="InterPro" id="IPR055173">
    <property type="entry name" value="NrdR-like_N"/>
</dbReference>
<dbReference type="InterPro" id="IPR003796">
    <property type="entry name" value="RNR_NrdR-like"/>
</dbReference>
<dbReference type="NCBIfam" id="TIGR00244">
    <property type="entry name" value="transcriptional regulator NrdR"/>
    <property type="match status" value="1"/>
</dbReference>
<dbReference type="PANTHER" id="PTHR30455">
    <property type="entry name" value="TRANSCRIPTIONAL REPRESSOR NRDR"/>
    <property type="match status" value="1"/>
</dbReference>
<dbReference type="PANTHER" id="PTHR30455:SF2">
    <property type="entry name" value="TRANSCRIPTIONAL REPRESSOR NRDR"/>
    <property type="match status" value="1"/>
</dbReference>
<dbReference type="Pfam" id="PF03477">
    <property type="entry name" value="ATP-cone"/>
    <property type="match status" value="1"/>
</dbReference>
<dbReference type="Pfam" id="PF22811">
    <property type="entry name" value="Zn_ribbon_NrdR"/>
    <property type="match status" value="1"/>
</dbReference>
<dbReference type="PROSITE" id="PS51161">
    <property type="entry name" value="ATP_CONE"/>
    <property type="match status" value="1"/>
</dbReference>
<sequence>MHCPYCNASDTKVIDSRLAAEGAQVRRRRSCNSCQERFTTFEVVEVVMPRIIKSSGKIEPYDNDKLRRSILLPLQKRPITIDEQEAMISRIEKRVRQMGEREVSSKVLGEIIMSELKTLDDVAYVRFASVYRDFQDIDAFHQEIANIRPNDK</sequence>
<evidence type="ECO:0000255" key="1">
    <source>
        <dbReference type="HAMAP-Rule" id="MF_00440"/>
    </source>
</evidence>
<feature type="chain" id="PRO_0000230885" description="Transcriptional repressor NrdR">
    <location>
        <begin position="1"/>
        <end position="152"/>
    </location>
</feature>
<feature type="domain" description="ATP-cone" evidence="1">
    <location>
        <begin position="49"/>
        <end position="139"/>
    </location>
</feature>
<feature type="zinc finger region" evidence="1">
    <location>
        <begin position="3"/>
        <end position="34"/>
    </location>
</feature>
<organism>
    <name type="scientific">Psychrobacter arcticus (strain DSM 17307 / VKM B-2377 / 273-4)</name>
    <dbReference type="NCBI Taxonomy" id="259536"/>
    <lineage>
        <taxon>Bacteria</taxon>
        <taxon>Pseudomonadati</taxon>
        <taxon>Pseudomonadota</taxon>
        <taxon>Gammaproteobacteria</taxon>
        <taxon>Moraxellales</taxon>
        <taxon>Moraxellaceae</taxon>
        <taxon>Psychrobacter</taxon>
    </lineage>
</organism>
<accession>Q4FPR9</accession>